<keyword id="KW-0010">Activator</keyword>
<keyword id="KW-0025">Alternative splicing</keyword>
<keyword id="KW-0053">Apoptosis</keyword>
<keyword id="KW-0067">ATP-binding</keyword>
<keyword id="KW-1003">Cell membrane</keyword>
<keyword id="KW-0217">Developmental protein</keyword>
<keyword id="KW-1015">Disulfide bond</keyword>
<keyword id="KW-0325">Glycoprotein</keyword>
<keyword id="KW-0418">Kinase</keyword>
<keyword id="KW-0421">Lactation</keyword>
<keyword id="KW-0472">Membrane</keyword>
<keyword id="KW-0496">Mitochondrion</keyword>
<keyword id="KW-0547">Nucleotide-binding</keyword>
<keyword id="KW-0539">Nucleus</keyword>
<keyword id="KW-0597">Phosphoprotein</keyword>
<keyword id="KW-0675">Receptor</keyword>
<keyword id="KW-1185">Reference proteome</keyword>
<keyword id="KW-0677">Repeat</keyword>
<keyword id="KW-0732">Signal</keyword>
<keyword id="KW-0804">Transcription</keyword>
<keyword id="KW-0805">Transcription regulation</keyword>
<keyword id="KW-0808">Transferase</keyword>
<keyword id="KW-0812">Transmembrane</keyword>
<keyword id="KW-1133">Transmembrane helix</keyword>
<keyword id="KW-0829">Tyrosine-protein kinase</keyword>
<keyword id="KW-0832">Ubl conjugation</keyword>
<proteinExistence type="evidence at protein level"/>
<sequence length="1308" mass="146855">MKLATGLWVWGSLLMAAGTVQPSASQSVCAGTENKLSSLSDLEQQYRALRKYYENCEVVMGNLEITSIEHNRDLSFLRSIREVTGYVLVALNQFRYLPLENLRIIRGTKLYEDRYALAIFLNYRKDGNFGLQELGLKNLTEILNGGVYVDQNKFLCYADTIHWQDIVRNPWPSNMTLVSTNGSSGCGRCHKSCTGRCWGPTENHCQTLTRTVCAEQCDGRCYGPYVSDCCHRECAGGCSGPKDTDCFACMNFNDSGACVTQCPQTFVYNPTTFQLEHNFNAKYTYGAFCVKKCPHNFVVDSSSCVRACPSSKMEVEENGIKMCKPCTDICPKACDGIGTGSLMSAQTVDSSNIDKFINCTKINGNLIFLVTGIHGDPYNAIDAIDPEKLNVFRTVREITGFLNIQSWPPNMTDFSVFSNLVTIGGRVLYSGLSLLILKQQGITSLQFQSLKEISAGNIYITDNSNLCYYHTINWTTLFSTINQRIVIRDNRRAENCTAEGMVCNHLCSNDGCWGPGPDQCLSCRRFSRGKICIESCNLYDGEFREFENGSICVECDSQCEKMEDGLLTCHGPGPDNCTKCSHFKDGPNCVEKCPDGLQGANSFIFKYADQDRECHPCHPNCTQGCNGPTSHDCIYYPWTGHSTLPQHARTPLIAAGVIGGLFILVIMALTFAVYVRRKSIKKKRALRRFLETELVEPLTPSGTAPNQAQLRILKETELKRVKVLGSGAFGTVYKGIWVPEGETVKIPVAIKILNETTGPKANVEFMDEALIMASMDHPHLVRLLGVCLSPTIQLVTQLMPHGCLLDYVHEHKDNIGSQLLLNWCVQIAKGMMYLEERRLVHRDLAARNVLVKSPNHVKITDFGLARLLEGDEKEYNADGGKMPIKWMALECIHYRKFTHQSDVWSYGVTIWELMTFGGKPYDGIPTREIPDLLEKGERLPQPPICTIDVYMVMVKCWMIDADSRPKFKELAAEFSRMARDPQRYLVIQGDDRMKLPSPNDSKFFQNLLDEEDLEDMMDAEEYLVPQAFNIPPPIYTSRTRIDSNRSEIGHSPPPAYTPMSGNQFVYQDGGFATQQGMPMPYRATTSTIPEAPVAQGATAEMFDDSCCNGTLRKPVAPHVQEDSSTQRYSADPTVFAPERNPRGELDEEGYMTPMHDKPKQEYLNPVEENPFVSRRKNGDLQALDNPEYHSASSGPPKAEDEYVNEPLYLNTFANALGSAEYMKNSVLSVPEKAKKAFDNPDYWNHSLPPRSTLQHPDYLQEYSTKYFYKQNGRIRPIVAENPEYLSEFSLKPGTMLPPPPYRHRNTVV</sequence>
<gene>
    <name type="primary">Erbb4</name>
    <name type="synonym">Mer4</name>
</gene>
<reference key="1">
    <citation type="journal article" date="2009" name="PLoS Biol.">
        <title>Lineage-specific biology revealed by a finished genome assembly of the mouse.</title>
        <authorList>
            <person name="Church D.M."/>
            <person name="Goodstadt L."/>
            <person name="Hillier L.W."/>
            <person name="Zody M.C."/>
            <person name="Goldstein S."/>
            <person name="She X."/>
            <person name="Bult C.J."/>
            <person name="Agarwala R."/>
            <person name="Cherry J.L."/>
            <person name="DiCuccio M."/>
            <person name="Hlavina W."/>
            <person name="Kapustin Y."/>
            <person name="Meric P."/>
            <person name="Maglott D."/>
            <person name="Birtle Z."/>
            <person name="Marques A.C."/>
            <person name="Graves T."/>
            <person name="Zhou S."/>
            <person name="Teague B."/>
            <person name="Potamousis K."/>
            <person name="Churas C."/>
            <person name="Place M."/>
            <person name="Herschleb J."/>
            <person name="Runnheim R."/>
            <person name="Forrest D."/>
            <person name="Amos-Landgraf J."/>
            <person name="Schwartz D.C."/>
            <person name="Cheng Z."/>
            <person name="Lindblad-Toh K."/>
            <person name="Eichler E.E."/>
            <person name="Ponting C.P."/>
        </authorList>
    </citation>
    <scope>NUCLEOTIDE SEQUENCE [LARGE SCALE GENOMIC DNA]</scope>
    <source>
        <strain>C57BL/6J</strain>
    </source>
</reference>
<reference key="2">
    <citation type="journal article" date="2005" name="Science">
        <title>The transcriptional landscape of the mammalian genome.</title>
        <authorList>
            <person name="Carninci P."/>
            <person name="Kasukawa T."/>
            <person name="Katayama S."/>
            <person name="Gough J."/>
            <person name="Frith M.C."/>
            <person name="Maeda N."/>
            <person name="Oyama R."/>
            <person name="Ravasi T."/>
            <person name="Lenhard B."/>
            <person name="Wells C."/>
            <person name="Kodzius R."/>
            <person name="Shimokawa K."/>
            <person name="Bajic V.B."/>
            <person name="Brenner S.E."/>
            <person name="Batalov S."/>
            <person name="Forrest A.R."/>
            <person name="Zavolan M."/>
            <person name="Davis M.J."/>
            <person name="Wilming L.G."/>
            <person name="Aidinis V."/>
            <person name="Allen J.E."/>
            <person name="Ambesi-Impiombato A."/>
            <person name="Apweiler R."/>
            <person name="Aturaliya R.N."/>
            <person name="Bailey T.L."/>
            <person name="Bansal M."/>
            <person name="Baxter L."/>
            <person name="Beisel K.W."/>
            <person name="Bersano T."/>
            <person name="Bono H."/>
            <person name="Chalk A.M."/>
            <person name="Chiu K.P."/>
            <person name="Choudhary V."/>
            <person name="Christoffels A."/>
            <person name="Clutterbuck D.R."/>
            <person name="Crowe M.L."/>
            <person name="Dalla E."/>
            <person name="Dalrymple B.P."/>
            <person name="de Bono B."/>
            <person name="Della Gatta G."/>
            <person name="di Bernardo D."/>
            <person name="Down T."/>
            <person name="Engstrom P."/>
            <person name="Fagiolini M."/>
            <person name="Faulkner G."/>
            <person name="Fletcher C.F."/>
            <person name="Fukushima T."/>
            <person name="Furuno M."/>
            <person name="Futaki S."/>
            <person name="Gariboldi M."/>
            <person name="Georgii-Hemming P."/>
            <person name="Gingeras T.R."/>
            <person name="Gojobori T."/>
            <person name="Green R.E."/>
            <person name="Gustincich S."/>
            <person name="Harbers M."/>
            <person name="Hayashi Y."/>
            <person name="Hensch T.K."/>
            <person name="Hirokawa N."/>
            <person name="Hill D."/>
            <person name="Huminiecki L."/>
            <person name="Iacono M."/>
            <person name="Ikeo K."/>
            <person name="Iwama A."/>
            <person name="Ishikawa T."/>
            <person name="Jakt M."/>
            <person name="Kanapin A."/>
            <person name="Katoh M."/>
            <person name="Kawasawa Y."/>
            <person name="Kelso J."/>
            <person name="Kitamura H."/>
            <person name="Kitano H."/>
            <person name="Kollias G."/>
            <person name="Krishnan S.P."/>
            <person name="Kruger A."/>
            <person name="Kummerfeld S.K."/>
            <person name="Kurochkin I.V."/>
            <person name="Lareau L.F."/>
            <person name="Lazarevic D."/>
            <person name="Lipovich L."/>
            <person name="Liu J."/>
            <person name="Liuni S."/>
            <person name="McWilliam S."/>
            <person name="Madan Babu M."/>
            <person name="Madera M."/>
            <person name="Marchionni L."/>
            <person name="Matsuda H."/>
            <person name="Matsuzawa S."/>
            <person name="Miki H."/>
            <person name="Mignone F."/>
            <person name="Miyake S."/>
            <person name="Morris K."/>
            <person name="Mottagui-Tabar S."/>
            <person name="Mulder N."/>
            <person name="Nakano N."/>
            <person name="Nakauchi H."/>
            <person name="Ng P."/>
            <person name="Nilsson R."/>
            <person name="Nishiguchi S."/>
            <person name="Nishikawa S."/>
            <person name="Nori F."/>
            <person name="Ohara O."/>
            <person name="Okazaki Y."/>
            <person name="Orlando V."/>
            <person name="Pang K.C."/>
            <person name="Pavan W.J."/>
            <person name="Pavesi G."/>
            <person name="Pesole G."/>
            <person name="Petrovsky N."/>
            <person name="Piazza S."/>
            <person name="Reed J."/>
            <person name="Reid J.F."/>
            <person name="Ring B.Z."/>
            <person name="Ringwald M."/>
            <person name="Rost B."/>
            <person name="Ruan Y."/>
            <person name="Salzberg S.L."/>
            <person name="Sandelin A."/>
            <person name="Schneider C."/>
            <person name="Schoenbach C."/>
            <person name="Sekiguchi K."/>
            <person name="Semple C.A."/>
            <person name="Seno S."/>
            <person name="Sessa L."/>
            <person name="Sheng Y."/>
            <person name="Shibata Y."/>
            <person name="Shimada H."/>
            <person name="Shimada K."/>
            <person name="Silva D."/>
            <person name="Sinclair B."/>
            <person name="Sperling S."/>
            <person name="Stupka E."/>
            <person name="Sugiura K."/>
            <person name="Sultana R."/>
            <person name="Takenaka Y."/>
            <person name="Taki K."/>
            <person name="Tammoja K."/>
            <person name="Tan S.L."/>
            <person name="Tang S."/>
            <person name="Taylor M.S."/>
            <person name="Tegner J."/>
            <person name="Teichmann S.A."/>
            <person name="Ueda H.R."/>
            <person name="van Nimwegen E."/>
            <person name="Verardo R."/>
            <person name="Wei C.L."/>
            <person name="Yagi K."/>
            <person name="Yamanishi H."/>
            <person name="Zabarovsky E."/>
            <person name="Zhu S."/>
            <person name="Zimmer A."/>
            <person name="Hide W."/>
            <person name="Bult C."/>
            <person name="Grimmond S.M."/>
            <person name="Teasdale R.D."/>
            <person name="Liu E.T."/>
            <person name="Brusic V."/>
            <person name="Quackenbush J."/>
            <person name="Wahlestedt C."/>
            <person name="Mattick J.S."/>
            <person name="Hume D.A."/>
            <person name="Kai C."/>
            <person name="Sasaki D."/>
            <person name="Tomaru Y."/>
            <person name="Fukuda S."/>
            <person name="Kanamori-Katayama M."/>
            <person name="Suzuki M."/>
            <person name="Aoki J."/>
            <person name="Arakawa T."/>
            <person name="Iida J."/>
            <person name="Imamura K."/>
            <person name="Itoh M."/>
            <person name="Kato T."/>
            <person name="Kawaji H."/>
            <person name="Kawagashira N."/>
            <person name="Kawashima T."/>
            <person name="Kojima M."/>
            <person name="Kondo S."/>
            <person name="Konno H."/>
            <person name="Nakano K."/>
            <person name="Ninomiya N."/>
            <person name="Nishio T."/>
            <person name="Okada M."/>
            <person name="Plessy C."/>
            <person name="Shibata K."/>
            <person name="Shiraki T."/>
            <person name="Suzuki S."/>
            <person name="Tagami M."/>
            <person name="Waki K."/>
            <person name="Watahiki A."/>
            <person name="Okamura-Oho Y."/>
            <person name="Suzuki H."/>
            <person name="Kawai J."/>
            <person name="Hayashizaki Y."/>
        </authorList>
    </citation>
    <scope>NUCLEOTIDE SEQUENCE [LARGE SCALE MRNA] OF 1-1263 (JM-A CYT-2)</scope>
    <source>
        <strain>C57BL/6J</strain>
        <tissue>Kidney</tissue>
    </source>
</reference>
<reference key="3">
    <citation type="journal article" date="1997" name="J. Biol. Chem.">
        <title>A novel juxtamembrane domain isoform of HER4/ErbB4. Isoform-specific tissue distribution and differential processing in response to phorbol ester.</title>
        <authorList>
            <person name="Elenius K."/>
            <person name="Corfas G."/>
            <person name="Paul S."/>
            <person name="Choi C.J."/>
            <person name="Rio C."/>
            <person name="Plowman G.D."/>
            <person name="Klagsbrun M."/>
        </authorList>
    </citation>
    <scope>NUCLEOTIDE SEQUENCE [MRNA] OF 624-650 (ISOFORMS JM-A CYT-2 AND JM-B CYT-2)</scope>
    <source>
        <tissue>Heart</tissue>
        <tissue>Kidney</tissue>
    </source>
</reference>
<reference key="4">
    <citation type="journal article" date="1995" name="Dev. Biol.">
        <title>Synapse-associated expression of an acetylcholine receptor-inducing protein, ARIA/heregulin, and its putative receptors, ErbB2 and ErbB3, in developing mammalian muscle.</title>
        <authorList>
            <person name="Moscoso L.M."/>
            <person name="Chu G.C."/>
            <person name="Gautam M."/>
            <person name="Noakes P.G."/>
            <person name="Merlie J.P."/>
            <person name="Sanes J.R."/>
        </authorList>
    </citation>
    <scope>NUCLEOTIDE SEQUENCE [MRNA] OF 1019-1102 (ISOFORM JM-A CYT-1)</scope>
    <source>
        <strain>C57BL/6J</strain>
        <tissue>Brain</tissue>
    </source>
</reference>
<reference key="5">
    <citation type="submission" date="1998-04" db="EMBL/GenBank/DDBJ databases">
        <title>Potential signaling network by EGF-like growth factors in the mouse uterus during early pregnancy.</title>
        <authorList>
            <person name="Lim H."/>
            <person name="Das S.K."/>
            <person name="Dey S.K."/>
        </authorList>
    </citation>
    <scope>NUCLEOTIDE SEQUENCE [MRNA] OF 1019-1093 (ISOFORM JM-A CYT-1)</scope>
    <source>
        <strain>CD-1</strain>
        <tissue>Uterus</tissue>
    </source>
</reference>
<reference key="6">
    <citation type="journal article" date="1995" name="Nature">
        <title>Aberrant neural and cardiac development in mice lacking the ErbB4 neuregulin receptor.</title>
        <authorList>
            <person name="Gassmann M."/>
            <person name="Casagranda F."/>
            <person name="Orioli D."/>
            <person name="Simon H."/>
            <person name="Lai C."/>
            <person name="Klein R."/>
            <person name="Lemke G."/>
        </authorList>
    </citation>
    <scope>DISRUPTION PHENOTYPE</scope>
    <scope>FUNCTION</scope>
</reference>
<reference key="7">
    <citation type="journal article" date="1999" name="J. Cell Biol.">
        <title>ErbB4 signaling in the mammary gland is required for lobuloalveolar development and Stat5 activation during lactation.</title>
        <authorList>
            <person name="Jones F.E."/>
            <person name="Welte T."/>
            <person name="Fu X.Y."/>
            <person name="Stern D.F."/>
        </authorList>
    </citation>
    <scope>FUNCTION IN MAMMARY GLAND DEVELOPMENT AND ACTIVATION OF STAT5A</scope>
    <scope>INTERACTION WITH STAT5A</scope>
</reference>
<reference key="8">
    <citation type="journal article" date="1999" name="Oncogene">
        <title>Characterization of a naturally occurring ErbB4 isoform that does not bind or activate phosphatidyl inositol 3-kinase.</title>
        <authorList>
            <person name="Elenius K."/>
            <person name="Choi C.J."/>
            <person name="Paul S."/>
            <person name="Santiestevan E."/>
            <person name="Nishi E."/>
            <person name="Klagsbrun M."/>
        </authorList>
    </citation>
    <scope>ALTERNATIVE SPLICING</scope>
    <scope>TISSUE SPECIFICITY</scope>
</reference>
<reference key="9">
    <citation type="journal article" date="2000" name="Nat. Cell Biol.">
        <title>Defects in pathfinding by cranial neural crest cells in mice lacking the neuregulin receptor ErbB4.</title>
        <authorList>
            <person name="Golding J.P."/>
            <person name="Trainor P."/>
            <person name="Krumlauf R."/>
            <person name="Gassmann M."/>
        </authorList>
    </citation>
    <scope>DISRUPTION PHENOTYPE</scope>
    <scope>FUNCTION</scope>
</reference>
<reference key="10">
    <citation type="journal article" date="2003" name="Development">
        <title>Impaired differentiation and lactational failure of Erbb4-deficient mammary glands identify ERBB4 as an obligate mediator of STAT5.</title>
        <authorList>
            <person name="Long W."/>
            <person name="Wagner K.U."/>
            <person name="Lloyd K.C."/>
            <person name="Binart N."/>
            <person name="Shillingford J.M."/>
            <person name="Hennighausen L."/>
            <person name="Jones F.E."/>
        </authorList>
    </citation>
    <scope>DISRUPTION PHENOTYPE</scope>
</reference>
<reference key="11">
    <citation type="journal article" date="2003" name="Proc. Natl. Acad. Sci. U.S.A.">
        <title>Neural and mammary gland defects in ErbB4 knockout mice genetically rescued from embryonic lethality.</title>
        <authorList>
            <person name="Tidcombe H."/>
            <person name="Jackson-Fisher A."/>
            <person name="Mathers K."/>
            <person name="Stern D.F."/>
            <person name="Gassmann M."/>
            <person name="Golding J.P."/>
        </authorList>
    </citation>
    <scope>DISRUPTION PHENOTYPE</scope>
</reference>
<reference key="12">
    <citation type="journal article" date="2004" name="Nat. Neurosci.">
        <title>Receptor tyrosine kinase ErbB4 modulates neuroblast migration and placement in the adult forebrain.</title>
        <authorList>
            <person name="Anton E.S."/>
            <person name="Ghashghaei H.T."/>
            <person name="Weber J.L."/>
            <person name="McCann C."/>
            <person name="Fischer T.M."/>
            <person name="Cheung I.D."/>
            <person name="Gassmann M."/>
            <person name="Messing A."/>
            <person name="Klein R."/>
            <person name="Schwab M.H."/>
            <person name="Lloyd K.C."/>
            <person name="Lai C."/>
        </authorList>
    </citation>
    <scope>FUNCTION IN NEUROBLAST MIGRATION</scope>
</reference>
<reference key="13">
    <citation type="journal article" date="2005" name="J. Biol. Chem.">
        <title>ERBB4/HER4 potentiates STAT5A transcriptional activity by regulating novel STAT5A serine phosphorylation events.</title>
        <authorList>
            <person name="Clark D.E."/>
            <person name="Williams C.C."/>
            <person name="Duplessis T.T."/>
            <person name="Moring K.L."/>
            <person name="Notwick A.R."/>
            <person name="Long W."/>
            <person name="Lane W.S."/>
            <person name="Beuvink I."/>
            <person name="Hynes N.E."/>
            <person name="Jones F.E."/>
        </authorList>
    </citation>
    <scope>FUNCTION</scope>
</reference>
<reference key="14">
    <citation type="journal article" date="2006" name="J. Biol. Chem.">
        <title>ErbB-4 s80 intracellular domain abrogates ETO2-dependent transcriptional repression.</title>
        <authorList>
            <person name="Linggi B."/>
            <person name="Carpenter G."/>
        </authorList>
    </citation>
    <scope>INTERACTION WITH CBFA2T3</scope>
</reference>
<reference key="15">
    <citation type="journal article" date="2006" name="Mol. Biol. Cell">
        <title>The intracellular domain of ErbB4 induces differentiation of mammary epithelial cells.</title>
        <authorList>
            <person name="Muraoka-Cook R.S."/>
            <person name="Sandahl M."/>
            <person name="Husted C."/>
            <person name="Hunter D."/>
            <person name="Miraglia L."/>
            <person name="Feng S.M."/>
            <person name="Elenius K."/>
            <person name="Earp H.S. III"/>
        </authorList>
    </citation>
    <scope>FUNCTION</scope>
    <scope>PROTEOLYTIC PROCESSING</scope>
    <scope>SUBCELLULAR LOCATION</scope>
</reference>
<reference key="16">
    <citation type="journal article" date="2009" name="Mol. Cell. Biol.">
        <title>ErbB4 splice variants Cyt1 and Cyt2 differ by 16 amino acids and exert opposing effects on the mammary epithelium in vivo.</title>
        <authorList>
            <person name="Muraoka-Cook R.S."/>
            <person name="Sandahl M.A."/>
            <person name="Strunk K.E."/>
            <person name="Miraglia L.C."/>
            <person name="Husted C."/>
            <person name="Hunter D.M."/>
            <person name="Elenius K."/>
            <person name="Chodosh L.A."/>
            <person name="Earp H.S. III"/>
        </authorList>
    </citation>
    <scope>FUNCTION OF E4ICD</scope>
</reference>
<reference key="17">
    <citation type="journal article" date="2009" name="Cell">
        <title>Neuregulin1/ErbB4 signaling induces cardiomyocyte proliferation and repair of heart injury.</title>
        <authorList>
            <person name="Bersell K."/>
            <person name="Arab S."/>
            <person name="Haring B."/>
            <person name="Kuhn B."/>
        </authorList>
    </citation>
    <scope>FUNCTION AS NRG1 RECEPTOR IN POSTNATAL CARDIOMYOCYTE PROLIFERATION</scope>
</reference>
<reference key="18">
    <citation type="journal article" date="2003" name="Cell Cycle">
        <title>ErbB4 signaling during breast and neural development: novel genetic models reveal unique ErbB4 activities.</title>
        <authorList>
            <person name="Jones F.E."/>
            <person name="Golding J.P."/>
            <person name="Gassmann M."/>
        </authorList>
    </citation>
    <scope>REVIEW</scope>
</reference>
<reference key="19">
    <citation type="journal article" date="2010" name="Cell">
        <title>A tissue-specific atlas of mouse protein phosphorylation and expression.</title>
        <authorList>
            <person name="Huttlin E.L."/>
            <person name="Jedrychowski M.P."/>
            <person name="Elias J.E."/>
            <person name="Goswami T."/>
            <person name="Rad R."/>
            <person name="Beausoleil S.A."/>
            <person name="Villen J."/>
            <person name="Haas W."/>
            <person name="Sowa M.E."/>
            <person name="Gygi S.P."/>
        </authorList>
    </citation>
    <scope>IDENTIFICATION BY MASS SPECTROMETRY [LARGE SCALE ANALYSIS]</scope>
    <source>
        <tissue>Brain</tissue>
    </source>
</reference>
<reference key="20">
    <citation type="journal article" date="2011" name="Curr. Opin. Genet. Dev.">
        <title>Neuregulin signaling, cortical circuitry development and schizophrenia.</title>
        <authorList>
            <person name="Rico B."/>
            <person name="Marin O."/>
        </authorList>
    </citation>
    <scope>REVIEW ON ROLE AS NEUREGULIN RECEPTOR</scope>
</reference>
<name>ERBB4_MOUSE</name>
<protein>
    <recommendedName>
        <fullName>Receptor tyrosine-protein kinase erbB-4</fullName>
        <ecNumber>2.7.10.1</ecNumber>
    </recommendedName>
    <alternativeName>
        <fullName>Proto-oncogene-like protein c-ErbB-4</fullName>
    </alternativeName>
    <component>
        <recommendedName>
            <fullName>ERBB4 intracellular domain</fullName>
            <shortName>4ICD</shortName>
            <shortName>E4ICD</shortName>
        </recommendedName>
        <alternativeName>
            <fullName>s80HER4</fullName>
        </alternativeName>
    </component>
</protein>
<comment type="function">
    <text evidence="8 9 12 13 15 16 17 18">Tyrosine-protein kinase that plays an essential role as cell surface receptor for neuregulins and EGF family members and regulates development of the heart, the central nervous system and the mammary gland, gene transcription, cell proliferation, differentiation, migration and apoptosis. Required for normal cardiac muscle differentiation during embryonic development, and for postnatal cardiomyocyte proliferation. Required for normal development of the embryonic central nervous system, especially for normal neural crest cell migration and normal axon guidance. Required for mammary gland differentiation, induction of milk proteins and lactation. Acts as cell-surface receptor for the neuregulins NRG1, NRG2, NRG3 and NRG4 and the EGF family members BTC, EREG and HBEGF. Ligand binding triggers receptor dimerization and autophosphorylation at specific tyrosine residues that then serve as binding sites for scaffold proteins and effectors. Ligand specificity and signaling is modulated by alternative splicing, proteolytic processing, and by the formation of heterodimers with other ERBB family members, thereby creating multiple combinations of intracellular phosphotyrosines that trigger ligand- and context-specific cellular responses. Mediates phosphorylation of SHC1 and activation of the MAP kinases MAPK1/ERK2 and MAPK3/ERK1. Isoform JM-A CYT-1 and isoform JM-B CYT-1 phosphorylate PIK3R1, leading to the activation of phosphatidylinositol 3-kinase and AKT1 and protect cells against apoptosis. Isoform JM-A CYT-1 and isoform JM-B CYT-1 mediate reorganization of the actin cytoskeleton and promote cell migration in response to NRG1. Isoform JM-A CYT-2 and isoform JM-B CYT-2 lack the phosphotyrosine that mediates interaction with PIK3R1, and hence do not phosphorylate PIK3R1, do not protect cells against apoptosis, and do not promote reorganization of the actin cytoskeleton and cell migration. Proteolytic processing of isoform JM-A CYT-1 and isoform JM-A CYT-2 gives rise to the corresponding soluble intracellular domains (4ICD) that translocate to the nucleus, promote nuclear import of STAT5A, activation of STAT5A, mammary epithelium differentiation, cell proliferation and activation of gene expression. The ERBB4 soluble intracellular domains (4ICD) colocalize with STAT5A at the CSN2 promoter to regulate transcription of milk proteins during lactation. The ERBB4 soluble intracellular domains can also translocate to mitochondria and promote apoptosis.</text>
</comment>
<comment type="catalytic activity">
    <reaction evidence="5">
        <text>L-tyrosyl-[protein] + ATP = O-phospho-L-tyrosyl-[protein] + ADP + H(+)</text>
        <dbReference type="Rhea" id="RHEA:10596"/>
        <dbReference type="Rhea" id="RHEA-COMP:10136"/>
        <dbReference type="Rhea" id="RHEA-COMP:20101"/>
        <dbReference type="ChEBI" id="CHEBI:15378"/>
        <dbReference type="ChEBI" id="CHEBI:30616"/>
        <dbReference type="ChEBI" id="CHEBI:46858"/>
        <dbReference type="ChEBI" id="CHEBI:61978"/>
        <dbReference type="ChEBI" id="CHEBI:456216"/>
        <dbReference type="EC" id="2.7.10.1"/>
    </reaction>
</comment>
<comment type="activity regulation">
    <text evidence="1">Binding of a cognate ligand leads to dimerization and activation by autophosphorylation on tyrosine residues. In vitro kinase activity is increased by Mg(2+) (By similarity).</text>
</comment>
<comment type="subunit">
    <text evidence="1 8 14">Monomer in the absence of bound ligand. Homodimer or heterodimer with another ERBB family member upon ligand binding, thus forming heterotetramers. Interacts with EGFR and ERBB2. Interacts with DLG2 (via its PDZ domain), DLG3 (via its PDZ domain), DLG4 (via its PDZ domain) and SNTB2 (via its PDZ domain). Interacts with MUC1. Interacts (via its PPxy motifs) with WWOX. Interacts (via the PPxY motif 3 of isoform JM-A CYT-2) with YAP1 (via the WW domain 1 of isoform 1). Interacts (isoform JM-A CYT-1 and isoform JM-B CYT-1) with WWP1. Interacts (via its intracellular domain) with TRIM28. Interacts (via the intracellular domains of both CYT-1 and CYT-2 isoforms) with KAP1; the interaction does not phosphorylate KAP1 but represses ERBB4-mediated transcriptional activity. Interacts with PRPU, DDX23, MATR3, RBM15, ILF3, KAP1, U5S1, U2SURP, ITCH, HNRNPU, AP2A1, NULC, LEO1, WWP2, IGHG1, HXK1, GRB7 and SRRT. Interacts (phosphorylated isoform JM-A CYT-1 and isoform JM-B CYT-1) with PIK3R1. Interacts with SHC1. Interacts with GRB2. Interacts (soluble intracellular domain) with BCL2. Interacts (phosphorylated) with STAT1 (By similarity). Interacts with CBFA2T3. Interacts (soluble intracellular domain) with STAT5A.</text>
</comment>
<comment type="interaction">
    <interactant intactId="EBI-4398741">
        <id>Q61527</id>
    </interactant>
    <interactant intactId="EBI-4320739">
        <id>Q9NZC7</id>
        <label>WWOX</label>
    </interactant>
    <organismsDiffer>true</organismsDiffer>
    <experiments>3</experiments>
</comment>
<comment type="subcellular location">
    <subcellularLocation>
        <location evidence="15">Cell membrane</location>
        <topology evidence="15">Single-pass type I membrane protein</topology>
    </subcellularLocation>
    <text>In response to NRG1 treatment, the activated receptor is internalized.</text>
</comment>
<comment type="subcellular location">
    <molecule>ERBB4 intracellular domain</molecule>
    <subcellularLocation>
        <location>Nucleus</location>
    </subcellularLocation>
    <subcellularLocation>
        <location evidence="1">Mitochondrion</location>
    </subcellularLocation>
    <text evidence="1">Following proteolytical processing E4ICD (E4ICD1 or E4ICD2 generated from the respective isoforms) is translocated to the nucleus. Significantly more E4ICD2 than E4ICD1 is found in the nucleus. E4ICD2 colocalizes with YAP1 in the nucleus (By similarity).</text>
</comment>
<comment type="alternative products">
    <event type="alternative splicing"/>
    <isoform>
        <id>Q61527-1</id>
        <name>JM-A CYT-1</name>
        <sequence type="displayed"/>
    </isoform>
    <isoform>
        <id>Q61527-2</id>
        <name>JM-B CYT-2</name>
        <sequence type="described" ref="VSP_002896"/>
    </isoform>
    <isoform>
        <id>Q61527-3</id>
        <name>JM-A CYT-2</name>
        <sequence type="described" ref="VSP_042131"/>
    </isoform>
    <text>Additional isoforms seem to exist.</text>
</comment>
<comment type="tissue specificity">
    <text evidence="7">Isoform JM-A CYT-2 and isoform JM-B CYT-2 are expressed in cerebellum, cerebral cortex, spinal cord, medulla oblongata and eye, but the kidney expresses solely isoform JM-A CYT-2 and the heart solely isoform JM-B CYT-2.</text>
</comment>
<comment type="PTM">
    <text evidence="1">Isoform JM-A CYT-1 and isoform JM-A CYT-2 are processed by ADAM17. Proteolytic processing in response to ligand or 12-O-tetradecanoylphorbol-13-acetate stimulation results in the production of 120 kDa soluble receptor forms and intermediate membrane-anchored 80 kDa fragments (m80HER4), which are further processed by a presenilin-dependent gamma-secretase to release a cytoplasmic intracellular domain (E4ICD; E4ICD1/s80Cyt1 or E4ICD2/s80Cyt2, depending on the isoform). Membrane-anchored 80 kDa fragments of the processed isoform JM-A CYT-1 are more readily degraded by the proteasome than fragments of isoform JM-A CYT-2, suggesting a prevalence of E4ICD2 over E4ICD1. Isoform JM-B CYT-1 and isoform JM-B CYT-2 lack the ADAM17 cleavage site and are not processed by ADAM17, precluding further processing by gamma-secretase (By similarity).</text>
</comment>
<comment type="PTM">
    <text evidence="1">Autophosphorylated on tyrosine residues in response to ligand binding. Autophosphorylation occurs in trans, i.e. one subunit of the dimeric receptor phosphorylates tyrosine residues on the other subunit. Ligands trigger phosphorylation at specific tyrosine residues, thereby creating binding sites for scaffold proteins and effectors. Constitutively phosphorylated at a basal level when overexpressed in heterologous systems; ligand binding leads to increased phosphorylation. Phosphorylation at Tyr-1035 is important for interaction with STAT1. Phosphorylation at Tyr-1056 is important for interaction with PIK3R1. Phosphorylation at Tyr-1242 is important for interaction with SHC1. Phosphorylation at Tyr-1188 may also contribute to the interaction with SHC1. Isoform JM-A CYT-2 is constitutively phosphorylated on tyrosine residues in a ligand-independent manner. E4ICD2 but not E4ICD1 is phosphorylated on tyrosine residues (By similarity).</text>
</comment>
<comment type="PTM">
    <text evidence="1">Ubiquitinated. During mitosis, the ERBB4 intracellular domain is ubiquitinated by the APC/C complex and targeted to proteasomal degradation. Isoform JM-A CYT-1 and isoform JM-B CYT-1 are ubiquitinated by WWP1. The ERBB4 intracellular domain (E4ICD1) is ubiquitinated, and this involves NEDD4 (By similarity).</text>
</comment>
<comment type="disruption phenotype">
    <text evidence="9 10 11 18">Embryonically lethal. Embryos die at about 10 dpc, due to defects in the development of myocardial trabeculae in the heart ventricle that lead to severely reduced embryonic blood flow. Mice also display aberrant innervation from and to the hindbrain, especially concerning the trigeminal, facial and acoustic ganglia. This is due to aberrant migration of a subpopulation of cranial neural crest cells.</text>
</comment>
<comment type="miscellaneous">
    <molecule>Isoform JM-A CYT-1</molecule>
    <text>Proteolytical processing generates E4ICD1 (s80Cyt1).</text>
</comment>
<comment type="miscellaneous">
    <molecule>Isoform JM-A CYT-2</molecule>
    <text evidence="20">Proteolytical processing generates E4ICD2 (s80Cyt2).</text>
</comment>
<comment type="similarity">
    <text evidence="4">Belongs to the protein kinase superfamily. Tyr protein kinase family. EGF receptor subfamily.</text>
</comment>
<evidence type="ECO:0000250" key="1"/>
<evidence type="ECO:0000250" key="2">
    <source>
        <dbReference type="UniProtKB" id="Q15303"/>
    </source>
</evidence>
<evidence type="ECO:0000255" key="3"/>
<evidence type="ECO:0000255" key="4">
    <source>
        <dbReference type="PROSITE-ProRule" id="PRU00159"/>
    </source>
</evidence>
<evidence type="ECO:0000255" key="5">
    <source>
        <dbReference type="PROSITE-ProRule" id="PRU10028"/>
    </source>
</evidence>
<evidence type="ECO:0000256" key="6">
    <source>
        <dbReference type="SAM" id="MobiDB-lite"/>
    </source>
</evidence>
<evidence type="ECO:0000269" key="7">
    <source>
    </source>
</evidence>
<evidence type="ECO:0000269" key="8">
    <source>
    </source>
</evidence>
<evidence type="ECO:0000269" key="9">
    <source>
    </source>
</evidence>
<evidence type="ECO:0000269" key="10">
    <source>
    </source>
</evidence>
<evidence type="ECO:0000269" key="11">
    <source>
    </source>
</evidence>
<evidence type="ECO:0000269" key="12">
    <source>
    </source>
</evidence>
<evidence type="ECO:0000269" key="13">
    <source>
    </source>
</evidence>
<evidence type="ECO:0000269" key="14">
    <source>
    </source>
</evidence>
<evidence type="ECO:0000269" key="15">
    <source>
    </source>
</evidence>
<evidence type="ECO:0000269" key="16">
    <source>
    </source>
</evidence>
<evidence type="ECO:0000269" key="17">
    <source>
    </source>
</evidence>
<evidence type="ECO:0000269" key="18">
    <source>
    </source>
</evidence>
<evidence type="ECO:0000303" key="19">
    <source>
    </source>
</evidence>
<evidence type="ECO:0000305" key="20"/>
<feature type="signal peptide" evidence="3">
    <location>
        <begin position="1"/>
        <end position="25"/>
    </location>
</feature>
<feature type="chain" id="PRO_0000270146" description="Receptor tyrosine-protein kinase erbB-4">
    <location>
        <begin position="26"/>
        <end position="1308"/>
    </location>
</feature>
<feature type="chain" id="PRO_0000396798" description="ERBB4 intracellular domain">
    <location>
        <begin position="676"/>
        <end position="1308"/>
    </location>
</feature>
<feature type="topological domain" description="Extracellular" evidence="3">
    <location>
        <begin position="26"/>
        <end position="652"/>
    </location>
</feature>
<feature type="transmembrane region" evidence="3">
    <location>
        <begin position="653"/>
        <end position="673"/>
    </location>
</feature>
<feature type="topological domain" description="Cytoplasmic" evidence="3">
    <location>
        <begin position="674"/>
        <end position="1308"/>
    </location>
</feature>
<feature type="domain" description="Protein kinase" evidence="4">
    <location>
        <begin position="718"/>
        <end position="985"/>
    </location>
</feature>
<feature type="region of interest" description="Disordered" evidence="6">
    <location>
        <begin position="1117"/>
        <end position="1149"/>
    </location>
</feature>
<feature type="short sequence motif" description="Nuclear localization signal" evidence="1">
    <location>
        <begin position="676"/>
        <end position="684"/>
    </location>
</feature>
<feature type="short sequence motif" description="PPxy motif 1" evidence="1">
    <location>
        <begin position="1032"/>
        <end position="1035"/>
    </location>
</feature>
<feature type="short sequence motif" description="PPxY motif 2" evidence="1">
    <location>
        <begin position="1282"/>
        <end position="1285"/>
    </location>
</feature>
<feature type="short sequence motif" description="PDZ-binding" evidence="1">
    <location>
        <begin position="1290"/>
        <end position="1292"/>
    </location>
</feature>
<feature type="active site" description="Proton acceptor" evidence="4 5">
    <location>
        <position position="843"/>
    </location>
</feature>
<feature type="binding site" evidence="4">
    <location>
        <begin position="724"/>
        <end position="732"/>
    </location>
    <ligand>
        <name>ATP</name>
        <dbReference type="ChEBI" id="CHEBI:30616"/>
    </ligand>
</feature>
<feature type="binding site" evidence="4">
    <location>
        <position position="751"/>
    </location>
    <ligand>
        <name>ATP</name>
        <dbReference type="ChEBI" id="CHEBI:30616"/>
    </ligand>
</feature>
<feature type="binding site" evidence="4">
    <location>
        <begin position="797"/>
        <end position="799"/>
    </location>
    <ligand>
        <name>ATP</name>
        <dbReference type="ChEBI" id="CHEBI:30616"/>
    </ligand>
</feature>
<feature type="binding site" evidence="4">
    <location>
        <begin position="843"/>
        <end position="848"/>
    </location>
    <ligand>
        <name>ATP</name>
        <dbReference type="ChEBI" id="CHEBI:30616"/>
    </ligand>
</feature>
<feature type="modified residue" description="Phosphotyrosine; by autocatalysis" evidence="2">
    <location>
        <position position="875"/>
    </location>
</feature>
<feature type="modified residue" description="Phosphotyrosine; by autocatalysis" evidence="2">
    <location>
        <position position="1035"/>
    </location>
</feature>
<feature type="modified residue" description="Phosphotyrosine; by autocatalysis" evidence="2">
    <location>
        <position position="1056"/>
    </location>
</feature>
<feature type="modified residue" description="Phosphotyrosine; by autocatalysis" evidence="2">
    <location>
        <position position="1150"/>
    </location>
</feature>
<feature type="modified residue" description="Phosphotyrosine; by autocatalysis" evidence="2">
    <location>
        <position position="1162"/>
    </location>
</feature>
<feature type="modified residue" description="Phosphotyrosine; by autocatalysis" evidence="2">
    <location>
        <position position="1188"/>
    </location>
</feature>
<feature type="modified residue" description="Phosphotyrosine; by autocatalysis" evidence="2">
    <location>
        <position position="1202"/>
    </location>
</feature>
<feature type="modified residue" description="Phosphotyrosine; by autocatalysis" evidence="2">
    <location>
        <position position="1242"/>
    </location>
</feature>
<feature type="modified residue" description="Phosphotyrosine; by autocatalysis" evidence="2">
    <location>
        <position position="1258"/>
    </location>
</feature>
<feature type="modified residue" description="Phosphotyrosine; by autocatalysis" evidence="2">
    <location>
        <position position="1284"/>
    </location>
</feature>
<feature type="glycosylation site" description="N-linked (GlcNAc...) asparagine" evidence="3">
    <location>
        <position position="138"/>
    </location>
</feature>
<feature type="glycosylation site" description="N-linked (GlcNAc...) asparagine" evidence="3">
    <location>
        <position position="174"/>
    </location>
</feature>
<feature type="glycosylation site" description="N-linked (GlcNAc...) asparagine" evidence="3">
    <location>
        <position position="181"/>
    </location>
</feature>
<feature type="glycosylation site" description="N-linked (GlcNAc...) asparagine" evidence="3">
    <location>
        <position position="253"/>
    </location>
</feature>
<feature type="glycosylation site" description="N-linked (GlcNAc...) asparagine" evidence="3">
    <location>
        <position position="410"/>
    </location>
</feature>
<feature type="glycosylation site" description="N-linked (GlcNAc...) asparagine" evidence="3">
    <location>
        <position position="473"/>
    </location>
</feature>
<feature type="glycosylation site" description="N-linked (GlcNAc...) asparagine" evidence="3">
    <location>
        <position position="495"/>
    </location>
</feature>
<feature type="glycosylation site" description="N-linked (GlcNAc...) asparagine" evidence="3">
    <location>
        <position position="548"/>
    </location>
</feature>
<feature type="glycosylation site" description="N-linked (GlcNAc...) asparagine" evidence="3">
    <location>
        <position position="576"/>
    </location>
</feature>
<feature type="glycosylation site" description="N-linked (GlcNAc...) asparagine" evidence="3">
    <location>
        <position position="620"/>
    </location>
</feature>
<feature type="disulfide bond" evidence="1">
    <location>
        <begin position="29"/>
        <end position="56"/>
    </location>
</feature>
<feature type="disulfide bond" evidence="1">
    <location>
        <begin position="156"/>
        <end position="186"/>
    </location>
</feature>
<feature type="disulfide bond" evidence="1">
    <location>
        <begin position="189"/>
        <end position="197"/>
    </location>
</feature>
<feature type="disulfide bond" evidence="1">
    <location>
        <begin position="193"/>
        <end position="205"/>
    </location>
</feature>
<feature type="disulfide bond" evidence="1">
    <location>
        <begin position="213"/>
        <end position="221"/>
    </location>
</feature>
<feature type="disulfide bond" evidence="1">
    <location>
        <begin position="217"/>
        <end position="229"/>
    </location>
</feature>
<feature type="disulfide bond" evidence="1">
    <location>
        <begin position="230"/>
        <end position="238"/>
    </location>
</feature>
<feature type="disulfide bond" evidence="1">
    <location>
        <begin position="234"/>
        <end position="246"/>
    </location>
</feature>
<feature type="disulfide bond" evidence="1">
    <location>
        <begin position="249"/>
        <end position="258"/>
    </location>
</feature>
<feature type="disulfide bond" evidence="1">
    <location>
        <begin position="262"/>
        <end position="289"/>
    </location>
</feature>
<feature type="disulfide bond" evidence="1">
    <location>
        <begin position="293"/>
        <end position="304"/>
    </location>
</feature>
<feature type="disulfide bond" evidence="1">
    <location>
        <begin position="308"/>
        <end position="323"/>
    </location>
</feature>
<feature type="disulfide bond" evidence="1">
    <location>
        <begin position="326"/>
        <end position="330"/>
    </location>
</feature>
<feature type="disulfide bond" evidence="1">
    <location>
        <begin position="503"/>
        <end position="512"/>
    </location>
</feature>
<feature type="disulfide bond" evidence="1">
    <location>
        <begin position="507"/>
        <end position="520"/>
    </location>
</feature>
<feature type="disulfide bond" evidence="1">
    <location>
        <begin position="523"/>
        <end position="532"/>
    </location>
</feature>
<feature type="disulfide bond" evidence="1">
    <location>
        <begin position="536"/>
        <end position="552"/>
    </location>
</feature>
<feature type="disulfide bond" evidence="1">
    <location>
        <begin position="555"/>
        <end position="569"/>
    </location>
</feature>
<feature type="disulfide bond" evidence="1">
    <location>
        <begin position="559"/>
        <end position="577"/>
    </location>
</feature>
<feature type="disulfide bond" evidence="1">
    <location>
        <begin position="580"/>
        <end position="589"/>
    </location>
</feature>
<feature type="disulfide bond" evidence="1">
    <location>
        <begin position="593"/>
        <end position="614"/>
    </location>
</feature>
<feature type="disulfide bond" evidence="1">
    <location>
        <begin position="617"/>
        <end position="625"/>
    </location>
</feature>
<feature type="disulfide bond" evidence="1">
    <location>
        <begin position="621"/>
        <end position="633"/>
    </location>
</feature>
<feature type="splice variant" id="VSP_002896" description="In isoform JM-B CYT-2." evidence="19">
    <original>NGPTSHDCIYYPWTGHSTLPQHA</original>
    <variation>IGSSIEDCIGLTD</variation>
    <location>
        <begin position="626"/>
        <end position="648"/>
    </location>
</feature>
<feature type="splice variant" id="VSP_042131" description="In isoform JM-A CYT-2." evidence="19">
    <location>
        <begin position="1046"/>
        <end position="1061"/>
    </location>
</feature>
<feature type="sequence conflict" description="In Ref. 5; AAC28334." evidence="20" ref="5">
    <original>A</original>
    <variation>V</variation>
    <location>
        <position position="1019"/>
    </location>
</feature>
<dbReference type="EC" id="2.7.10.1"/>
<dbReference type="EMBL" id="CU368746">
    <property type="status" value="NOT_ANNOTATED_CDS"/>
    <property type="molecule type" value="Genomic_DNA"/>
</dbReference>
<dbReference type="EMBL" id="CU372923">
    <property type="status" value="NOT_ANNOTATED_CDS"/>
    <property type="molecule type" value="Genomic_DNA"/>
</dbReference>
<dbReference type="EMBL" id="CU392849">
    <property type="status" value="NOT_ANNOTATED_CDS"/>
    <property type="molecule type" value="Genomic_DNA"/>
</dbReference>
<dbReference type="EMBL" id="CU405881">
    <property type="status" value="NOT_ANNOTATED_CDS"/>
    <property type="molecule type" value="Genomic_DNA"/>
</dbReference>
<dbReference type="EMBL" id="CU407006">
    <property type="status" value="NOT_ANNOTATED_CDS"/>
    <property type="molecule type" value="Genomic_DNA"/>
</dbReference>
<dbReference type="EMBL" id="CU459008">
    <property type="status" value="NOT_ANNOTATED_CDS"/>
    <property type="molecule type" value="Genomic_DNA"/>
</dbReference>
<dbReference type="EMBL" id="CU459207">
    <property type="status" value="NOT_ANNOTATED_CDS"/>
    <property type="molecule type" value="Genomic_DNA"/>
</dbReference>
<dbReference type="EMBL" id="AK144050">
    <property type="protein sequence ID" value="BAE25671.1"/>
    <property type="molecule type" value="mRNA"/>
</dbReference>
<dbReference type="EMBL" id="L47241">
    <property type="protein sequence ID" value="AAA93534.1"/>
    <property type="molecule type" value="mRNA"/>
</dbReference>
<dbReference type="EMBL" id="AF059177">
    <property type="protein sequence ID" value="AAC28334.1"/>
    <property type="molecule type" value="mRNA"/>
</dbReference>
<dbReference type="CCDS" id="CCDS48285.1">
    <molecule id="Q61527-3"/>
</dbReference>
<dbReference type="RefSeq" id="NP_034284.1">
    <molecule id="Q61527-3"/>
    <property type="nucleotide sequence ID" value="NM_010154.2"/>
</dbReference>
<dbReference type="RefSeq" id="XP_006495755.1">
    <molecule id="Q61527-1"/>
    <property type="nucleotide sequence ID" value="XM_006495692.5"/>
</dbReference>
<dbReference type="RefSeq" id="XP_006495756.1">
    <molecule id="Q61527-2"/>
    <property type="nucleotide sequence ID" value="XM_006495693.5"/>
</dbReference>
<dbReference type="SMR" id="Q61527"/>
<dbReference type="BioGRID" id="199498">
    <property type="interactions" value="8"/>
</dbReference>
<dbReference type="DIP" id="DIP-29887N"/>
<dbReference type="FunCoup" id="Q61527">
    <property type="interactions" value="1069"/>
</dbReference>
<dbReference type="IntAct" id="Q61527">
    <property type="interactions" value="3"/>
</dbReference>
<dbReference type="STRING" id="10090.ENSMUSP00000114123"/>
<dbReference type="GlyConnect" id="2677">
    <property type="glycosylation" value="1 N-Linked glycan (1 site)"/>
</dbReference>
<dbReference type="GlyCosmos" id="Q61527">
    <property type="glycosylation" value="11 sites, 1 glycan"/>
</dbReference>
<dbReference type="GlyGen" id="Q61527">
    <property type="glycosylation" value="11 sites, 5 N-linked glycans (5 sites)"/>
</dbReference>
<dbReference type="iPTMnet" id="Q61527"/>
<dbReference type="PhosphoSitePlus" id="Q61527"/>
<dbReference type="SwissPalm" id="Q61527"/>
<dbReference type="jPOST" id="Q61527"/>
<dbReference type="PaxDb" id="10090-ENSMUSP00000114123"/>
<dbReference type="PeptideAtlas" id="Q61527"/>
<dbReference type="ProteomicsDB" id="275879">
    <molecule id="Q61527-1"/>
</dbReference>
<dbReference type="ProteomicsDB" id="275880">
    <molecule id="Q61527-2"/>
</dbReference>
<dbReference type="ProteomicsDB" id="275881">
    <molecule id="Q61527-3"/>
</dbReference>
<dbReference type="Antibodypedia" id="1602">
    <property type="antibodies" value="1462 antibodies from 46 providers"/>
</dbReference>
<dbReference type="DNASU" id="13869"/>
<dbReference type="Ensembl" id="ENSMUST00000119142.8">
    <molecule id="Q61527-1"/>
    <property type="protein sequence ID" value="ENSMUSP00000112713.2"/>
    <property type="gene ID" value="ENSMUSG00000062209.16"/>
</dbReference>
<dbReference type="Ensembl" id="ENSMUST00000121473.8">
    <molecule id="Q61527-3"/>
    <property type="protein sequence ID" value="ENSMUSP00000114123.2"/>
    <property type="gene ID" value="ENSMUSG00000062209.16"/>
</dbReference>
<dbReference type="GeneID" id="13869"/>
<dbReference type="KEGG" id="mmu:13869"/>
<dbReference type="UCSC" id="uc007bjb.1">
    <molecule id="Q61527-3"/>
    <property type="organism name" value="mouse"/>
</dbReference>
<dbReference type="AGR" id="MGI:104771"/>
<dbReference type="CTD" id="2066"/>
<dbReference type="MGI" id="MGI:104771">
    <property type="gene designation" value="Erbb4"/>
</dbReference>
<dbReference type="VEuPathDB" id="HostDB:ENSMUSG00000062209"/>
<dbReference type="eggNOG" id="KOG1025">
    <property type="taxonomic scope" value="Eukaryota"/>
</dbReference>
<dbReference type="GeneTree" id="ENSGT00940000154695"/>
<dbReference type="HOGENOM" id="CLU_003384_1_1_1"/>
<dbReference type="InParanoid" id="Q61527"/>
<dbReference type="OMA" id="VCHSECL"/>
<dbReference type="OrthoDB" id="45077at9989"/>
<dbReference type="PhylomeDB" id="Q61527"/>
<dbReference type="TreeFam" id="TF106002"/>
<dbReference type="Reactome" id="R-MMU-1227986">
    <property type="pathway name" value="Signaling by ERBB2"/>
</dbReference>
<dbReference type="Reactome" id="R-MMU-1236394">
    <property type="pathway name" value="Signaling by ERBB4"/>
</dbReference>
<dbReference type="Reactome" id="R-MMU-1250196">
    <property type="pathway name" value="SHC1 events in ERBB2 signaling"/>
</dbReference>
<dbReference type="Reactome" id="R-MMU-1250342">
    <property type="pathway name" value="PI3K events in ERBB4 signaling"/>
</dbReference>
<dbReference type="Reactome" id="R-MMU-1250347">
    <property type="pathway name" value="SHC1 events in ERBB4 signaling"/>
</dbReference>
<dbReference type="Reactome" id="R-MMU-1251985">
    <property type="pathway name" value="Nuclear signaling by ERBB4"/>
</dbReference>
<dbReference type="Reactome" id="R-MMU-1253288">
    <property type="pathway name" value="Downregulation of ERBB4 signaling"/>
</dbReference>
<dbReference type="Reactome" id="R-MMU-1257604">
    <property type="pathway name" value="PIP3 activates AKT signaling"/>
</dbReference>
<dbReference type="Reactome" id="R-MMU-1963640">
    <property type="pathway name" value="GRB2 events in ERBB2 signaling"/>
</dbReference>
<dbReference type="Reactome" id="R-MMU-1963642">
    <property type="pathway name" value="PI3K events in ERBB2 signaling"/>
</dbReference>
<dbReference type="Reactome" id="R-MMU-5673001">
    <property type="pathway name" value="RAF/MAP kinase cascade"/>
</dbReference>
<dbReference type="Reactome" id="R-MMU-6785631">
    <property type="pathway name" value="ERBB2 Regulates Cell Motility"/>
</dbReference>
<dbReference type="Reactome" id="R-MMU-6811558">
    <property type="pathway name" value="PI5P, PP2A and IER3 Regulate PI3K/AKT Signaling"/>
</dbReference>
<dbReference type="Reactome" id="R-MMU-8847993">
    <property type="pathway name" value="ERBB2 Activates PTK6 Signaling"/>
</dbReference>
<dbReference type="Reactome" id="R-MMU-8863795">
    <property type="pathway name" value="Downregulation of ERBB2 signaling"/>
</dbReference>
<dbReference type="Reactome" id="R-MMU-9018519">
    <property type="pathway name" value="Estrogen-dependent gene expression"/>
</dbReference>
<dbReference type="BioGRID-ORCS" id="13869">
    <property type="hits" value="1 hit in 82 CRISPR screens"/>
</dbReference>
<dbReference type="ChiTaRS" id="Erbb4">
    <property type="organism name" value="mouse"/>
</dbReference>
<dbReference type="PRO" id="PR:Q61527"/>
<dbReference type="Proteomes" id="UP000000589">
    <property type="component" value="Chromosome 1"/>
</dbReference>
<dbReference type="RNAct" id="Q61527">
    <property type="molecule type" value="protein"/>
</dbReference>
<dbReference type="Bgee" id="ENSMUSG00000062209">
    <property type="expression patterns" value="Expressed in neural tube mantle layer and 155 other cell types or tissues"/>
</dbReference>
<dbReference type="ExpressionAtlas" id="Q61527">
    <property type="expression patterns" value="baseline and differential"/>
</dbReference>
<dbReference type="GO" id="GO:0016323">
    <property type="term" value="C:basolateral plasma membrane"/>
    <property type="evidence" value="ECO:0007669"/>
    <property type="project" value="Ensembl"/>
</dbReference>
<dbReference type="GO" id="GO:0098982">
    <property type="term" value="C:GABA-ergic synapse"/>
    <property type="evidence" value="ECO:0000314"/>
    <property type="project" value="SynGO"/>
</dbReference>
<dbReference type="GO" id="GO:0098978">
    <property type="term" value="C:glutamatergic synapse"/>
    <property type="evidence" value="ECO:0000314"/>
    <property type="project" value="SynGO"/>
</dbReference>
<dbReference type="GO" id="GO:0005739">
    <property type="term" value="C:mitochondrion"/>
    <property type="evidence" value="ECO:0007669"/>
    <property type="project" value="UniProtKB-SubCell"/>
</dbReference>
<dbReference type="GO" id="GO:0031594">
    <property type="term" value="C:neuromuscular junction"/>
    <property type="evidence" value="ECO:0000314"/>
    <property type="project" value="SynGO"/>
</dbReference>
<dbReference type="GO" id="GO:0005634">
    <property type="term" value="C:nucleus"/>
    <property type="evidence" value="ECO:0007669"/>
    <property type="project" value="UniProtKB-SubCell"/>
</dbReference>
<dbReference type="GO" id="GO:0005886">
    <property type="term" value="C:plasma membrane"/>
    <property type="evidence" value="ECO:0000314"/>
    <property type="project" value="MGI"/>
</dbReference>
<dbReference type="GO" id="GO:0098839">
    <property type="term" value="C:postsynaptic density membrane"/>
    <property type="evidence" value="ECO:0000314"/>
    <property type="project" value="MGI"/>
</dbReference>
<dbReference type="GO" id="GO:0045211">
    <property type="term" value="C:postsynaptic membrane"/>
    <property type="evidence" value="ECO:0000250"/>
    <property type="project" value="UniProtKB"/>
</dbReference>
<dbReference type="GO" id="GO:0042734">
    <property type="term" value="C:presynaptic membrane"/>
    <property type="evidence" value="ECO:0000314"/>
    <property type="project" value="SynGO"/>
</dbReference>
<dbReference type="GO" id="GO:0043235">
    <property type="term" value="C:receptor complex"/>
    <property type="evidence" value="ECO:0000266"/>
    <property type="project" value="MGI"/>
</dbReference>
<dbReference type="GO" id="GO:0005524">
    <property type="term" value="F:ATP binding"/>
    <property type="evidence" value="ECO:0007669"/>
    <property type="project" value="UniProtKB-KW"/>
</dbReference>
<dbReference type="GO" id="GO:0005006">
    <property type="term" value="F:epidermal growth factor receptor activity"/>
    <property type="evidence" value="ECO:0000316"/>
    <property type="project" value="MGI"/>
</dbReference>
<dbReference type="GO" id="GO:0005154">
    <property type="term" value="F:epidermal growth factor receptor binding"/>
    <property type="evidence" value="ECO:0007669"/>
    <property type="project" value="Ensembl"/>
</dbReference>
<dbReference type="GO" id="GO:0050811">
    <property type="term" value="F:GABA receptor binding"/>
    <property type="evidence" value="ECO:0000314"/>
    <property type="project" value="MGI"/>
</dbReference>
<dbReference type="GO" id="GO:0038132">
    <property type="term" value="F:neuregulin binding"/>
    <property type="evidence" value="ECO:0000266"/>
    <property type="project" value="MGI"/>
</dbReference>
<dbReference type="GO" id="GO:0038131">
    <property type="term" value="F:neuregulin receptor activity"/>
    <property type="evidence" value="ECO:0000314"/>
    <property type="project" value="MGI"/>
</dbReference>
<dbReference type="GO" id="GO:0042803">
    <property type="term" value="F:protein homodimerization activity"/>
    <property type="evidence" value="ECO:0007669"/>
    <property type="project" value="Ensembl"/>
</dbReference>
<dbReference type="GO" id="GO:0004713">
    <property type="term" value="F:protein tyrosine kinase activity"/>
    <property type="evidence" value="ECO:0000314"/>
    <property type="project" value="MGI"/>
</dbReference>
<dbReference type="GO" id="GO:0000976">
    <property type="term" value="F:transcription cis-regulatory region binding"/>
    <property type="evidence" value="ECO:0007669"/>
    <property type="project" value="Ensembl"/>
</dbReference>
<dbReference type="GO" id="GO:0004714">
    <property type="term" value="F:transmembrane receptor protein tyrosine kinase activity"/>
    <property type="evidence" value="ECO:0000314"/>
    <property type="project" value="MGI"/>
</dbReference>
<dbReference type="GO" id="GO:0061026">
    <property type="term" value="P:cardiac muscle tissue regeneration"/>
    <property type="evidence" value="ECO:0000315"/>
    <property type="project" value="UniProtKB"/>
</dbReference>
<dbReference type="GO" id="GO:0045165">
    <property type="term" value="P:cell fate commitment"/>
    <property type="evidence" value="ECO:0000314"/>
    <property type="project" value="MGI"/>
</dbReference>
<dbReference type="GO" id="GO:0016477">
    <property type="term" value="P:cell migration"/>
    <property type="evidence" value="ECO:0000250"/>
    <property type="project" value="UniProtKB"/>
</dbReference>
<dbReference type="GO" id="GO:0007169">
    <property type="term" value="P:cell surface receptor protein tyrosine kinase signaling pathway"/>
    <property type="evidence" value="ECO:0000250"/>
    <property type="project" value="UniProtKB"/>
</dbReference>
<dbReference type="GO" id="GO:0007166">
    <property type="term" value="P:cell surface receptor signaling pathway"/>
    <property type="evidence" value="ECO:0000314"/>
    <property type="project" value="MGI"/>
</dbReference>
<dbReference type="GO" id="GO:0007259">
    <property type="term" value="P:cell surface receptor signaling pathway via JAK-STAT"/>
    <property type="evidence" value="ECO:0000315"/>
    <property type="project" value="UniProtKB"/>
</dbReference>
<dbReference type="GO" id="GO:0071364">
    <property type="term" value="P:cellular response to epidermal growth factor stimulus"/>
    <property type="evidence" value="ECO:0000314"/>
    <property type="project" value="MGI"/>
</dbReference>
<dbReference type="GO" id="GO:0021551">
    <property type="term" value="P:central nervous system morphogenesis"/>
    <property type="evidence" value="ECO:0000315"/>
    <property type="project" value="UniProtKB"/>
</dbReference>
<dbReference type="GO" id="GO:0009880">
    <property type="term" value="P:embryonic pattern specification"/>
    <property type="evidence" value="ECO:0000315"/>
    <property type="project" value="UniProtKB"/>
</dbReference>
<dbReference type="GO" id="GO:0038135">
    <property type="term" value="P:ERBB2-ERBB4 signaling pathway"/>
    <property type="evidence" value="ECO:0000314"/>
    <property type="project" value="MGI"/>
</dbReference>
<dbReference type="GO" id="GO:0038130">
    <property type="term" value="P:ERBB4 signaling pathway"/>
    <property type="evidence" value="ECO:0000315"/>
    <property type="project" value="MGI"/>
</dbReference>
<dbReference type="GO" id="GO:0038138">
    <property type="term" value="P:ERBB4-ERBB4 signaling pathway"/>
    <property type="evidence" value="ECO:0000314"/>
    <property type="project" value="MGI"/>
</dbReference>
<dbReference type="GO" id="GO:0072046">
    <property type="term" value="P:establishment of planar polarity involved in nephron morphogenesis"/>
    <property type="evidence" value="ECO:0000315"/>
    <property type="project" value="MGI"/>
</dbReference>
<dbReference type="GO" id="GO:0007507">
    <property type="term" value="P:heart development"/>
    <property type="evidence" value="ECO:0000315"/>
    <property type="project" value="MGI"/>
</dbReference>
<dbReference type="GO" id="GO:0007595">
    <property type="term" value="P:lactation"/>
    <property type="evidence" value="ECO:0000315"/>
    <property type="project" value="UniProtKB"/>
</dbReference>
<dbReference type="GO" id="GO:0060749">
    <property type="term" value="P:mammary gland alveolus development"/>
    <property type="evidence" value="ECO:0000315"/>
    <property type="project" value="UniProtKB"/>
</dbReference>
<dbReference type="GO" id="GO:0060644">
    <property type="term" value="P:mammary gland epithelial cell differentiation"/>
    <property type="evidence" value="ECO:0000315"/>
    <property type="project" value="UniProtKB"/>
</dbReference>
<dbReference type="GO" id="GO:0043653">
    <property type="term" value="P:mitochondrial fragmentation involved in apoptotic process"/>
    <property type="evidence" value="ECO:0000250"/>
    <property type="project" value="UniProtKB"/>
</dbReference>
<dbReference type="GO" id="GO:0043066">
    <property type="term" value="P:negative regulation of apoptotic process"/>
    <property type="evidence" value="ECO:0000314"/>
    <property type="project" value="MGI"/>
</dbReference>
<dbReference type="GO" id="GO:0008285">
    <property type="term" value="P:negative regulation of cell population proliferation"/>
    <property type="evidence" value="ECO:0000250"/>
    <property type="project" value="UniProtKB"/>
</dbReference>
<dbReference type="GO" id="GO:2001223">
    <property type="term" value="P:negative regulation of neuron migration"/>
    <property type="evidence" value="ECO:0000315"/>
    <property type="project" value="MGI"/>
</dbReference>
<dbReference type="GO" id="GO:0007399">
    <property type="term" value="P:nervous system development"/>
    <property type="evidence" value="ECO:0000315"/>
    <property type="project" value="MGI"/>
</dbReference>
<dbReference type="GO" id="GO:0001755">
    <property type="term" value="P:neural crest cell migration"/>
    <property type="evidence" value="ECO:0000315"/>
    <property type="project" value="UniProtKB"/>
</dbReference>
<dbReference type="GO" id="GO:0099645">
    <property type="term" value="P:neurotransmitter receptor localization to postsynaptic specialization membrane"/>
    <property type="evidence" value="ECO:0000314"/>
    <property type="project" value="SynGO"/>
</dbReference>
<dbReference type="GO" id="GO:0021889">
    <property type="term" value="P:olfactory bulb interneuron differentiation"/>
    <property type="evidence" value="ECO:0000315"/>
    <property type="project" value="UniProtKB"/>
</dbReference>
<dbReference type="GO" id="GO:0018108">
    <property type="term" value="P:peptidyl-tyrosine phosphorylation"/>
    <property type="evidence" value="ECO:0000250"/>
    <property type="project" value="UniProtKB"/>
</dbReference>
<dbReference type="GO" id="GO:0043065">
    <property type="term" value="P:positive regulation of apoptotic process"/>
    <property type="evidence" value="ECO:0000314"/>
    <property type="project" value="MGI"/>
</dbReference>
<dbReference type="GO" id="GO:0060045">
    <property type="term" value="P:positive regulation of cardiac muscle cell proliferation"/>
    <property type="evidence" value="ECO:0000315"/>
    <property type="project" value="UniProtKB"/>
</dbReference>
<dbReference type="GO" id="GO:0008284">
    <property type="term" value="P:positive regulation of cell population proliferation"/>
    <property type="evidence" value="ECO:0000314"/>
    <property type="project" value="MGI"/>
</dbReference>
<dbReference type="GO" id="GO:0045893">
    <property type="term" value="P:positive regulation of DNA-templated transcription"/>
    <property type="evidence" value="ECO:0000315"/>
    <property type="project" value="UniProtKB"/>
</dbReference>
<dbReference type="GO" id="GO:0070374">
    <property type="term" value="P:positive regulation of ERK1 and ERK2 cascade"/>
    <property type="evidence" value="ECO:0000250"/>
    <property type="project" value="UniProtKB"/>
</dbReference>
<dbReference type="GO" id="GO:0051897">
    <property type="term" value="P:positive regulation of phosphatidylinositol 3-kinase/protein kinase B signal transduction"/>
    <property type="evidence" value="ECO:0000316"/>
    <property type="project" value="MGI"/>
</dbReference>
<dbReference type="GO" id="GO:2000010">
    <property type="term" value="P:positive regulation of protein localization to cell surface"/>
    <property type="evidence" value="ECO:0000316"/>
    <property type="project" value="MGI"/>
</dbReference>
<dbReference type="GO" id="GO:0046427">
    <property type="term" value="P:positive regulation of receptor signaling pathway via JAK-STAT"/>
    <property type="evidence" value="ECO:0000315"/>
    <property type="project" value="UniProtKB"/>
</dbReference>
<dbReference type="GO" id="GO:0042531">
    <property type="term" value="P:positive regulation of tyrosine phosphorylation of STAT protein"/>
    <property type="evidence" value="ECO:0000315"/>
    <property type="project" value="UniProtKB"/>
</dbReference>
<dbReference type="GO" id="GO:0046777">
    <property type="term" value="P:protein autophosphorylation"/>
    <property type="evidence" value="ECO:0000250"/>
    <property type="project" value="UniProtKB"/>
</dbReference>
<dbReference type="GO" id="GO:0030334">
    <property type="term" value="P:regulation of cell migration"/>
    <property type="evidence" value="ECO:0000315"/>
    <property type="project" value="UniProtKB"/>
</dbReference>
<dbReference type="GO" id="GO:0007416">
    <property type="term" value="P:synapse assembly"/>
    <property type="evidence" value="ECO:0000314"/>
    <property type="project" value="SynGO"/>
</dbReference>
<dbReference type="CDD" id="cd00064">
    <property type="entry name" value="FU"/>
    <property type="match status" value="3"/>
</dbReference>
<dbReference type="CDD" id="cd05110">
    <property type="entry name" value="PTKc_HER4"/>
    <property type="match status" value="1"/>
</dbReference>
<dbReference type="CDD" id="cd12092">
    <property type="entry name" value="TM_ErbB4"/>
    <property type="match status" value="1"/>
</dbReference>
<dbReference type="FunFam" id="2.10.220.10:FF:000001">
    <property type="entry name" value="Receptor protein-tyrosine kinase"/>
    <property type="match status" value="1"/>
</dbReference>
<dbReference type="FunFam" id="2.10.220.10:FF:000004">
    <property type="entry name" value="Receptor protein-tyrosine kinase"/>
    <property type="match status" value="1"/>
</dbReference>
<dbReference type="FunFam" id="3.30.200.20:FF:000044">
    <property type="entry name" value="Receptor protein-tyrosine kinase"/>
    <property type="match status" value="1"/>
</dbReference>
<dbReference type="FunFam" id="3.80.20.20:FF:000003">
    <property type="entry name" value="Receptor protein-tyrosine kinase"/>
    <property type="match status" value="1"/>
</dbReference>
<dbReference type="FunFam" id="3.80.20.20:FF:000004">
    <property type="entry name" value="Receptor protein-tyrosine kinase"/>
    <property type="match status" value="1"/>
</dbReference>
<dbReference type="FunFam" id="1.10.510.10:FF:002828">
    <property type="entry name" value="Receptor tyrosine-protein kinase erbB-2"/>
    <property type="match status" value="1"/>
</dbReference>
<dbReference type="Gene3D" id="6.10.250.880">
    <property type="match status" value="1"/>
</dbReference>
<dbReference type="Gene3D" id="2.10.220.10">
    <property type="entry name" value="Hormone Receptor, Insulin-like Growth Factor Receptor 1, Chain A, domain 2"/>
    <property type="match status" value="3"/>
</dbReference>
<dbReference type="Gene3D" id="3.30.200.20">
    <property type="entry name" value="Phosphorylase Kinase, domain 1"/>
    <property type="match status" value="1"/>
</dbReference>
<dbReference type="Gene3D" id="3.80.20.20">
    <property type="entry name" value="Receptor L-domain"/>
    <property type="match status" value="2"/>
</dbReference>
<dbReference type="Gene3D" id="1.10.510.10">
    <property type="entry name" value="Transferase(Phosphotransferase) domain 1"/>
    <property type="match status" value="1"/>
</dbReference>
<dbReference type="InterPro" id="IPR006211">
    <property type="entry name" value="Furin-like_Cys-rich_dom"/>
</dbReference>
<dbReference type="InterPro" id="IPR006212">
    <property type="entry name" value="Furin_repeat"/>
</dbReference>
<dbReference type="InterPro" id="IPR032778">
    <property type="entry name" value="GF_recep_IV"/>
</dbReference>
<dbReference type="InterPro" id="IPR009030">
    <property type="entry name" value="Growth_fac_rcpt_cys_sf"/>
</dbReference>
<dbReference type="InterPro" id="IPR011009">
    <property type="entry name" value="Kinase-like_dom_sf"/>
</dbReference>
<dbReference type="InterPro" id="IPR000719">
    <property type="entry name" value="Prot_kinase_dom"/>
</dbReference>
<dbReference type="InterPro" id="IPR017441">
    <property type="entry name" value="Protein_kinase_ATP_BS"/>
</dbReference>
<dbReference type="InterPro" id="IPR000494">
    <property type="entry name" value="Rcpt_L-dom"/>
</dbReference>
<dbReference type="InterPro" id="IPR036941">
    <property type="entry name" value="Rcpt_L-dom_sf"/>
</dbReference>
<dbReference type="InterPro" id="IPR050122">
    <property type="entry name" value="RTK"/>
</dbReference>
<dbReference type="InterPro" id="IPR001245">
    <property type="entry name" value="Ser-Thr/Tyr_kinase_cat_dom"/>
</dbReference>
<dbReference type="InterPro" id="IPR049328">
    <property type="entry name" value="TM_ErbB1"/>
</dbReference>
<dbReference type="InterPro" id="IPR008266">
    <property type="entry name" value="Tyr_kinase_AS"/>
</dbReference>
<dbReference type="InterPro" id="IPR020635">
    <property type="entry name" value="Tyr_kinase_cat_dom"/>
</dbReference>
<dbReference type="InterPro" id="IPR016245">
    <property type="entry name" value="Tyr_kinase_EGF/ERB/XmrK_rcpt"/>
</dbReference>
<dbReference type="PANTHER" id="PTHR24416:SF90">
    <property type="entry name" value="RECEPTOR TYROSINE-PROTEIN KINASE ERBB-4"/>
    <property type="match status" value="1"/>
</dbReference>
<dbReference type="PANTHER" id="PTHR24416">
    <property type="entry name" value="TYROSINE-PROTEIN KINASE RECEPTOR"/>
    <property type="match status" value="1"/>
</dbReference>
<dbReference type="Pfam" id="PF00757">
    <property type="entry name" value="Furin-like"/>
    <property type="match status" value="1"/>
</dbReference>
<dbReference type="Pfam" id="PF14843">
    <property type="entry name" value="GF_recep_IV"/>
    <property type="match status" value="1"/>
</dbReference>
<dbReference type="Pfam" id="PF07714">
    <property type="entry name" value="PK_Tyr_Ser-Thr"/>
    <property type="match status" value="1"/>
</dbReference>
<dbReference type="Pfam" id="PF01030">
    <property type="entry name" value="Recep_L_domain"/>
    <property type="match status" value="2"/>
</dbReference>
<dbReference type="Pfam" id="PF21314">
    <property type="entry name" value="TM_ErbB1"/>
    <property type="match status" value="1"/>
</dbReference>
<dbReference type="PIRSF" id="PIRSF000619">
    <property type="entry name" value="TyrPK_EGF-R"/>
    <property type="match status" value="1"/>
</dbReference>
<dbReference type="PRINTS" id="PR00109">
    <property type="entry name" value="TYRKINASE"/>
</dbReference>
<dbReference type="SMART" id="SM00261">
    <property type="entry name" value="FU"/>
    <property type="match status" value="5"/>
</dbReference>
<dbReference type="SMART" id="SM00219">
    <property type="entry name" value="TyrKc"/>
    <property type="match status" value="1"/>
</dbReference>
<dbReference type="SUPFAM" id="SSF57184">
    <property type="entry name" value="Growth factor receptor domain"/>
    <property type="match status" value="2"/>
</dbReference>
<dbReference type="SUPFAM" id="SSF52058">
    <property type="entry name" value="L domain-like"/>
    <property type="match status" value="2"/>
</dbReference>
<dbReference type="SUPFAM" id="SSF56112">
    <property type="entry name" value="Protein kinase-like (PK-like)"/>
    <property type="match status" value="1"/>
</dbReference>
<dbReference type="PROSITE" id="PS00107">
    <property type="entry name" value="PROTEIN_KINASE_ATP"/>
    <property type="match status" value="1"/>
</dbReference>
<dbReference type="PROSITE" id="PS50011">
    <property type="entry name" value="PROTEIN_KINASE_DOM"/>
    <property type="match status" value="1"/>
</dbReference>
<dbReference type="PROSITE" id="PS00109">
    <property type="entry name" value="PROTEIN_KINASE_TYR"/>
    <property type="match status" value="1"/>
</dbReference>
<organism>
    <name type="scientific">Mus musculus</name>
    <name type="common">Mouse</name>
    <dbReference type="NCBI Taxonomy" id="10090"/>
    <lineage>
        <taxon>Eukaryota</taxon>
        <taxon>Metazoa</taxon>
        <taxon>Chordata</taxon>
        <taxon>Craniata</taxon>
        <taxon>Vertebrata</taxon>
        <taxon>Euteleostomi</taxon>
        <taxon>Mammalia</taxon>
        <taxon>Eutheria</taxon>
        <taxon>Euarchontoglires</taxon>
        <taxon>Glires</taxon>
        <taxon>Rodentia</taxon>
        <taxon>Myomorpha</taxon>
        <taxon>Muroidea</taxon>
        <taxon>Muridae</taxon>
        <taxon>Murinae</taxon>
        <taxon>Mus</taxon>
        <taxon>Mus</taxon>
    </lineage>
</organism>
<accession>Q61527</accession>
<accession>B2KGF5</accession>
<accession>B2KGF6</accession>
<accession>O88460</accession>
<accession>Q3UNS6</accession>